<evidence type="ECO:0000250" key="1"/>
<evidence type="ECO:0000250" key="2">
    <source>
        <dbReference type="UniProtKB" id="P08217"/>
    </source>
</evidence>
<evidence type="ECO:0000255" key="3">
    <source>
        <dbReference type="PROSITE-ProRule" id="PRU00274"/>
    </source>
</evidence>
<feature type="signal peptide">
    <location>
        <begin position="1"/>
        <end position="16"/>
    </location>
</feature>
<feature type="propeptide" id="PRO_0000027691" description="Activation peptide">
    <location>
        <begin position="17"/>
        <end position="30"/>
    </location>
</feature>
<feature type="chain" id="PRO_0000027692" description="Chymotrypsin-like elastase family member 2A">
    <location>
        <begin position="31"/>
        <end position="271"/>
    </location>
</feature>
<feature type="domain" description="Peptidase S1" evidence="3">
    <location>
        <begin position="31"/>
        <end position="269"/>
    </location>
</feature>
<feature type="active site" description="Charge relay system" evidence="1">
    <location>
        <position position="75"/>
    </location>
</feature>
<feature type="active site" description="Charge relay system" evidence="1">
    <location>
        <position position="123"/>
    </location>
</feature>
<feature type="active site" description="Charge relay system" evidence="1">
    <location>
        <position position="218"/>
    </location>
</feature>
<feature type="disulfide bond" evidence="3">
    <location>
        <begin position="60"/>
        <end position="76"/>
    </location>
</feature>
<feature type="disulfide bond" evidence="3">
    <location>
        <begin position="157"/>
        <end position="224"/>
    </location>
</feature>
<feature type="disulfide bond" evidence="3">
    <location>
        <begin position="188"/>
        <end position="204"/>
    </location>
</feature>
<feature type="disulfide bond" evidence="3">
    <location>
        <begin position="214"/>
        <end position="245"/>
    </location>
</feature>
<comment type="function">
    <text evidence="2">Elastase that enhances insulin signaling and might have a physiologic role in cellular glucose metabolism. Circulates in plasma and reduces platelet hyperactivation, triggers both insulin secretion and degradation, and increases insulin sensitivity.</text>
</comment>
<comment type="catalytic activity">
    <reaction evidence="2">
        <text>Preferential cleavage: Leu-|-Xaa, Met-|-Xaa and Phe-|-Xaa. Hydrolyzes elastin.</text>
        <dbReference type="EC" id="3.4.21.71"/>
    </reaction>
</comment>
<comment type="subunit">
    <text evidence="2">Interacts with CPA1. Interacts with SERPINA1.</text>
</comment>
<comment type="subcellular location">
    <subcellularLocation>
        <location evidence="2">Secreted</location>
    </subcellularLocation>
</comment>
<comment type="tissue specificity">
    <text>Pancreas.</text>
</comment>
<comment type="similarity">
    <text evidence="3">Belongs to the peptidase S1 family. Elastase subfamily.</text>
</comment>
<organism>
    <name type="scientific">Rattus norvegicus</name>
    <name type="common">Rat</name>
    <dbReference type="NCBI Taxonomy" id="10116"/>
    <lineage>
        <taxon>Eukaryota</taxon>
        <taxon>Metazoa</taxon>
        <taxon>Chordata</taxon>
        <taxon>Craniata</taxon>
        <taxon>Vertebrata</taxon>
        <taxon>Euteleostomi</taxon>
        <taxon>Mammalia</taxon>
        <taxon>Eutheria</taxon>
        <taxon>Euarchontoglires</taxon>
        <taxon>Glires</taxon>
        <taxon>Rodentia</taxon>
        <taxon>Myomorpha</taxon>
        <taxon>Muroidea</taxon>
        <taxon>Muridae</taxon>
        <taxon>Murinae</taxon>
        <taxon>Rattus</taxon>
    </lineage>
</organism>
<reference key="1">
    <citation type="journal article" date="1982" name="Biochemistry">
        <title>Primary structure of two distinct rat pancreatic preproelastases determined by sequence analysis of the complete cloned messenger ribonucleic acid sequences.</title>
        <authorList>
            <person name="MacDonald R.J."/>
            <person name="Swift G.H."/>
            <person name="Quinto C."/>
            <person name="Swain W."/>
            <person name="Pictet R.L."/>
            <person name="Nikovits W."/>
            <person name="Rutter W.J."/>
        </authorList>
    </citation>
    <scope>NUCLEOTIDE SEQUENCE [MRNA]</scope>
</reference>
<reference key="2">
    <citation type="journal article" date="1984" name="J. Biol. Chem.">
        <title>Structure of the two related elastase genes expressed in the rat pancreas.</title>
        <authorList>
            <person name="Swift G.H."/>
            <person name="Craik C.S."/>
            <person name="Stary S.J."/>
            <person name="Quinto C."/>
            <person name="Lahaie R.G."/>
            <person name="Rutter W.J."/>
            <person name="MacDonald R.J."/>
        </authorList>
    </citation>
    <scope>NUCLEOTIDE SEQUENCE [GENOMIC DNA]</scope>
</reference>
<dbReference type="EC" id="3.4.21.71"/>
<dbReference type="EMBL" id="V01233">
    <property type="protein sequence ID" value="CAA24543.1"/>
    <property type="molecule type" value="mRNA"/>
</dbReference>
<dbReference type="EMBL" id="L00124">
    <property type="protein sequence ID" value="AAA98780.1"/>
    <property type="molecule type" value="Genomic_DNA"/>
</dbReference>
<dbReference type="EMBL" id="L00118">
    <property type="protein sequence ID" value="AAA98780.1"/>
    <property type="status" value="JOINED"/>
    <property type="molecule type" value="Genomic_DNA"/>
</dbReference>
<dbReference type="EMBL" id="L00119">
    <property type="protein sequence ID" value="AAA98780.1"/>
    <property type="status" value="JOINED"/>
    <property type="molecule type" value="Genomic_DNA"/>
</dbReference>
<dbReference type="EMBL" id="L00120">
    <property type="protein sequence ID" value="AAA98780.1"/>
    <property type="status" value="JOINED"/>
    <property type="molecule type" value="Genomic_DNA"/>
</dbReference>
<dbReference type="EMBL" id="L00121">
    <property type="protein sequence ID" value="AAA98780.1"/>
    <property type="status" value="JOINED"/>
    <property type="molecule type" value="Genomic_DNA"/>
</dbReference>
<dbReference type="EMBL" id="L00122">
    <property type="protein sequence ID" value="AAA98780.1"/>
    <property type="status" value="JOINED"/>
    <property type="molecule type" value="Genomic_DNA"/>
</dbReference>
<dbReference type="EMBL" id="L00123">
    <property type="protein sequence ID" value="AAA98780.1"/>
    <property type="status" value="JOINED"/>
    <property type="molecule type" value="Genomic_DNA"/>
</dbReference>
<dbReference type="PIR" id="A00961">
    <property type="entry name" value="ELRT2"/>
</dbReference>
<dbReference type="RefSeq" id="NP_036685.1">
    <property type="nucleotide sequence ID" value="NM_012553.2"/>
</dbReference>
<dbReference type="SMR" id="P00774"/>
<dbReference type="FunCoup" id="P00774">
    <property type="interactions" value="111"/>
</dbReference>
<dbReference type="STRING" id="10116.ENSRNOP00000018349"/>
<dbReference type="BindingDB" id="P00774"/>
<dbReference type="ChEMBL" id="CHEMBL3888"/>
<dbReference type="MEROPS" id="S01.155"/>
<dbReference type="PhosphoSitePlus" id="P00774"/>
<dbReference type="PaxDb" id="10116-ENSRNOP00000018349"/>
<dbReference type="Ensembl" id="ENSRNOT00000018349.5">
    <property type="protein sequence ID" value="ENSRNOP00000018349.3"/>
    <property type="gene ID" value="ENSRNOG00000013628.5"/>
</dbReference>
<dbReference type="GeneID" id="24332"/>
<dbReference type="KEGG" id="rno:24332"/>
<dbReference type="UCSC" id="RGD:2548">
    <property type="organism name" value="rat"/>
</dbReference>
<dbReference type="AGR" id="RGD:2548"/>
<dbReference type="CTD" id="63036"/>
<dbReference type="RGD" id="2548">
    <property type="gene designation" value="Cela2a"/>
</dbReference>
<dbReference type="eggNOG" id="KOG3627">
    <property type="taxonomic scope" value="Eukaryota"/>
</dbReference>
<dbReference type="GeneTree" id="ENSGT01030000234528"/>
<dbReference type="HOGENOM" id="CLU_006842_0_4_1"/>
<dbReference type="InParanoid" id="P00774"/>
<dbReference type="OMA" id="GSTLGCN"/>
<dbReference type="OrthoDB" id="10061449at2759"/>
<dbReference type="PhylomeDB" id="P00774"/>
<dbReference type="TreeFam" id="TF330455"/>
<dbReference type="Reactome" id="R-RNO-6809371">
    <property type="pathway name" value="Formation of the cornified envelope"/>
</dbReference>
<dbReference type="PRO" id="PR:P00774"/>
<dbReference type="Proteomes" id="UP000002494">
    <property type="component" value="Chromosome 5"/>
</dbReference>
<dbReference type="Bgee" id="ENSRNOG00000013628">
    <property type="expression patterns" value="Expressed in pancreas and 17 other cell types or tissues"/>
</dbReference>
<dbReference type="GO" id="GO:0005576">
    <property type="term" value="C:extracellular region"/>
    <property type="evidence" value="ECO:0000250"/>
    <property type="project" value="UniProtKB"/>
</dbReference>
<dbReference type="GO" id="GO:0005615">
    <property type="term" value="C:extracellular space"/>
    <property type="evidence" value="ECO:0000318"/>
    <property type="project" value="GO_Central"/>
</dbReference>
<dbReference type="GO" id="GO:0036457">
    <property type="term" value="C:keratohyalin granule"/>
    <property type="evidence" value="ECO:0000266"/>
    <property type="project" value="RGD"/>
</dbReference>
<dbReference type="GO" id="GO:0004175">
    <property type="term" value="F:endopeptidase activity"/>
    <property type="evidence" value="ECO:0000250"/>
    <property type="project" value="UniProtKB"/>
</dbReference>
<dbReference type="GO" id="GO:0017171">
    <property type="term" value="F:serine hydrolase activity"/>
    <property type="evidence" value="ECO:0000266"/>
    <property type="project" value="RGD"/>
</dbReference>
<dbReference type="GO" id="GO:0004252">
    <property type="term" value="F:serine-type endopeptidase activity"/>
    <property type="evidence" value="ECO:0000318"/>
    <property type="project" value="GO_Central"/>
</dbReference>
<dbReference type="GO" id="GO:1901143">
    <property type="term" value="P:insulin catabolic process"/>
    <property type="evidence" value="ECO:0000250"/>
    <property type="project" value="UniProtKB"/>
</dbReference>
<dbReference type="GO" id="GO:0006508">
    <property type="term" value="P:proteolysis"/>
    <property type="evidence" value="ECO:0000318"/>
    <property type="project" value="GO_Central"/>
</dbReference>
<dbReference type="GO" id="GO:0050796">
    <property type="term" value="P:regulation of insulin secretion"/>
    <property type="evidence" value="ECO:0000250"/>
    <property type="project" value="UniProtKB"/>
</dbReference>
<dbReference type="GO" id="GO:0090330">
    <property type="term" value="P:regulation of platelet aggregation"/>
    <property type="evidence" value="ECO:0000250"/>
    <property type="project" value="UniProtKB"/>
</dbReference>
<dbReference type="GO" id="GO:0032868">
    <property type="term" value="P:response to insulin"/>
    <property type="evidence" value="ECO:0000250"/>
    <property type="project" value="UniProtKB"/>
</dbReference>
<dbReference type="CDD" id="cd00190">
    <property type="entry name" value="Tryp_SPc"/>
    <property type="match status" value="1"/>
</dbReference>
<dbReference type="FunFam" id="2.40.10.10:FF:000280">
    <property type="match status" value="1"/>
</dbReference>
<dbReference type="FunFam" id="2.40.10.10:FF:000004">
    <property type="entry name" value="Tryptase gamma 1"/>
    <property type="match status" value="1"/>
</dbReference>
<dbReference type="Gene3D" id="2.40.10.10">
    <property type="entry name" value="Trypsin-like serine proteases"/>
    <property type="match status" value="2"/>
</dbReference>
<dbReference type="InterPro" id="IPR050850">
    <property type="entry name" value="Peptidase_S1_Elastase_sf"/>
</dbReference>
<dbReference type="InterPro" id="IPR009003">
    <property type="entry name" value="Peptidase_S1_PA"/>
</dbReference>
<dbReference type="InterPro" id="IPR043504">
    <property type="entry name" value="Peptidase_S1_PA_chymotrypsin"/>
</dbReference>
<dbReference type="InterPro" id="IPR001314">
    <property type="entry name" value="Peptidase_S1A"/>
</dbReference>
<dbReference type="InterPro" id="IPR001254">
    <property type="entry name" value="Trypsin_dom"/>
</dbReference>
<dbReference type="InterPro" id="IPR018114">
    <property type="entry name" value="TRYPSIN_HIS"/>
</dbReference>
<dbReference type="InterPro" id="IPR033116">
    <property type="entry name" value="TRYPSIN_SER"/>
</dbReference>
<dbReference type="PANTHER" id="PTHR24257">
    <property type="entry name" value="CHYMOTRYPSIN-LIKE ELASTASE FAMILY MEMBER"/>
    <property type="match status" value="1"/>
</dbReference>
<dbReference type="PANTHER" id="PTHR24257:SF19">
    <property type="entry name" value="CHYMOTRYPSIN-LIKE ELASTASE FAMILY MEMBER 2B"/>
    <property type="match status" value="1"/>
</dbReference>
<dbReference type="Pfam" id="PF00089">
    <property type="entry name" value="Trypsin"/>
    <property type="match status" value="1"/>
</dbReference>
<dbReference type="PRINTS" id="PR00722">
    <property type="entry name" value="CHYMOTRYPSIN"/>
</dbReference>
<dbReference type="SMART" id="SM00020">
    <property type="entry name" value="Tryp_SPc"/>
    <property type="match status" value="1"/>
</dbReference>
<dbReference type="SUPFAM" id="SSF50494">
    <property type="entry name" value="Trypsin-like serine proteases"/>
    <property type="match status" value="1"/>
</dbReference>
<dbReference type="PROSITE" id="PS50240">
    <property type="entry name" value="TRYPSIN_DOM"/>
    <property type="match status" value="1"/>
</dbReference>
<dbReference type="PROSITE" id="PS00134">
    <property type="entry name" value="TRYPSIN_HIS"/>
    <property type="match status" value="1"/>
</dbReference>
<dbReference type="PROSITE" id="PS00135">
    <property type="entry name" value="TRYPSIN_SER"/>
    <property type="match status" value="1"/>
</dbReference>
<name>CEL2A_RAT</name>
<protein>
    <recommendedName>
        <fullName>Chymotrypsin-like elastase family member 2A</fullName>
        <ecNumber>3.4.21.71</ecNumber>
    </recommendedName>
    <alternativeName>
        <fullName>Elastase-2</fullName>
    </alternativeName>
    <alternativeName>
        <fullName>Elastase-2A</fullName>
    </alternativeName>
</protein>
<proteinExistence type="evidence at transcript level"/>
<accession>P00774</accession>
<sequence>MIRTLLLSALVAGALSCGYPTYEVQHDVSRVVGGQEASPNSWPWQVSLQYLSSGKWHHTCGGSLVANNWVLTAAHCISNSRTYRVLLGRHSLSTSESGSLAVQVSKLVVHEKWNAQKLSNGNDIALVKLASPVALTSKIQTACLPPAGTILPNNYPCYVTGWGRLQTNGATPDVLQQGRLLVVDYATCSSASWWGSSVKTNMVCAGGDGVTSSCNGDSGGPLNCQASNGQWQVHGIVSFGSTLGCNYPRKPSVFTRVSNYIDWINSVIAKN</sequence>
<gene>
    <name type="primary">Cela2a</name>
    <name type="synonym">Ela2</name>
    <name type="synonym">Ela2a</name>
</gene>
<keyword id="KW-1015">Disulfide bond</keyword>
<keyword id="KW-0378">Hydrolase</keyword>
<keyword id="KW-0645">Protease</keyword>
<keyword id="KW-1185">Reference proteome</keyword>
<keyword id="KW-0964">Secreted</keyword>
<keyword id="KW-0720">Serine protease</keyword>
<keyword id="KW-0732">Signal</keyword>
<keyword id="KW-0865">Zymogen</keyword>